<sequence length="100" mass="10981">MDLTPREKDKLLIFTAGLLAERRLARGLRLNHPEAVAYISAALLEGARDGHTVAELMHIGTTLLSRDQVMEGVPEMIPEIQIEATFPDGTKLVTVHQPIA</sequence>
<feature type="chain" id="PRO_1000212799" description="Urease subunit gamma">
    <location>
        <begin position="1"/>
        <end position="100"/>
    </location>
</feature>
<organism>
    <name type="scientific">Azotobacter vinelandii (strain DJ / ATCC BAA-1303)</name>
    <dbReference type="NCBI Taxonomy" id="322710"/>
    <lineage>
        <taxon>Bacteria</taxon>
        <taxon>Pseudomonadati</taxon>
        <taxon>Pseudomonadota</taxon>
        <taxon>Gammaproteobacteria</taxon>
        <taxon>Pseudomonadales</taxon>
        <taxon>Pseudomonadaceae</taxon>
        <taxon>Azotobacter</taxon>
    </lineage>
</organism>
<proteinExistence type="inferred from homology"/>
<keyword id="KW-0963">Cytoplasm</keyword>
<keyword id="KW-0378">Hydrolase</keyword>
<dbReference type="EC" id="3.5.1.5" evidence="1"/>
<dbReference type="EMBL" id="CP001157">
    <property type="protein sequence ID" value="ACO77222.1"/>
    <property type="molecule type" value="Genomic_DNA"/>
</dbReference>
<dbReference type="RefSeq" id="WP_012699645.1">
    <property type="nucleotide sequence ID" value="NC_012560.1"/>
</dbReference>
<dbReference type="SMR" id="C1DNK6"/>
<dbReference type="STRING" id="322710.Avin_09900"/>
<dbReference type="EnsemblBacteria" id="ACO77222">
    <property type="protein sequence ID" value="ACO77222"/>
    <property type="gene ID" value="Avin_09900"/>
</dbReference>
<dbReference type="GeneID" id="88184339"/>
<dbReference type="KEGG" id="avn:Avin_09900"/>
<dbReference type="eggNOG" id="COG0831">
    <property type="taxonomic scope" value="Bacteria"/>
</dbReference>
<dbReference type="HOGENOM" id="CLU_145825_1_0_6"/>
<dbReference type="OrthoDB" id="9797217at2"/>
<dbReference type="UniPathway" id="UPA00258">
    <property type="reaction ID" value="UER00370"/>
</dbReference>
<dbReference type="Proteomes" id="UP000002424">
    <property type="component" value="Chromosome"/>
</dbReference>
<dbReference type="GO" id="GO:0005737">
    <property type="term" value="C:cytoplasm"/>
    <property type="evidence" value="ECO:0007669"/>
    <property type="project" value="UniProtKB-SubCell"/>
</dbReference>
<dbReference type="GO" id="GO:0016151">
    <property type="term" value="F:nickel cation binding"/>
    <property type="evidence" value="ECO:0007669"/>
    <property type="project" value="InterPro"/>
</dbReference>
<dbReference type="GO" id="GO:0009039">
    <property type="term" value="F:urease activity"/>
    <property type="evidence" value="ECO:0007669"/>
    <property type="project" value="UniProtKB-UniRule"/>
</dbReference>
<dbReference type="GO" id="GO:0043419">
    <property type="term" value="P:urea catabolic process"/>
    <property type="evidence" value="ECO:0007669"/>
    <property type="project" value="UniProtKB-UniRule"/>
</dbReference>
<dbReference type="CDD" id="cd00390">
    <property type="entry name" value="Urease_gamma"/>
    <property type="match status" value="1"/>
</dbReference>
<dbReference type="Gene3D" id="3.30.280.10">
    <property type="entry name" value="Urease, gamma-like subunit"/>
    <property type="match status" value="1"/>
</dbReference>
<dbReference type="HAMAP" id="MF_00739">
    <property type="entry name" value="Urease_gamma"/>
    <property type="match status" value="1"/>
</dbReference>
<dbReference type="InterPro" id="IPR012010">
    <property type="entry name" value="Urease_gamma"/>
</dbReference>
<dbReference type="InterPro" id="IPR002026">
    <property type="entry name" value="Urease_gamma/gamma-beta_su"/>
</dbReference>
<dbReference type="InterPro" id="IPR036463">
    <property type="entry name" value="Urease_gamma_sf"/>
</dbReference>
<dbReference type="InterPro" id="IPR050069">
    <property type="entry name" value="Urease_subunit"/>
</dbReference>
<dbReference type="NCBIfam" id="NF009712">
    <property type="entry name" value="PRK13241.1"/>
    <property type="match status" value="1"/>
</dbReference>
<dbReference type="NCBIfam" id="TIGR00193">
    <property type="entry name" value="urease_gam"/>
    <property type="match status" value="1"/>
</dbReference>
<dbReference type="PANTHER" id="PTHR33569">
    <property type="entry name" value="UREASE"/>
    <property type="match status" value="1"/>
</dbReference>
<dbReference type="PANTHER" id="PTHR33569:SF1">
    <property type="entry name" value="UREASE"/>
    <property type="match status" value="1"/>
</dbReference>
<dbReference type="Pfam" id="PF00547">
    <property type="entry name" value="Urease_gamma"/>
    <property type="match status" value="1"/>
</dbReference>
<dbReference type="PIRSF" id="PIRSF001223">
    <property type="entry name" value="Urease_gamma"/>
    <property type="match status" value="1"/>
</dbReference>
<dbReference type="SUPFAM" id="SSF54111">
    <property type="entry name" value="Urease, gamma-subunit"/>
    <property type="match status" value="1"/>
</dbReference>
<evidence type="ECO:0000255" key="1">
    <source>
        <dbReference type="HAMAP-Rule" id="MF_00739"/>
    </source>
</evidence>
<comment type="catalytic activity">
    <reaction evidence="1">
        <text>urea + 2 H2O + H(+) = hydrogencarbonate + 2 NH4(+)</text>
        <dbReference type="Rhea" id="RHEA:20557"/>
        <dbReference type="ChEBI" id="CHEBI:15377"/>
        <dbReference type="ChEBI" id="CHEBI:15378"/>
        <dbReference type="ChEBI" id="CHEBI:16199"/>
        <dbReference type="ChEBI" id="CHEBI:17544"/>
        <dbReference type="ChEBI" id="CHEBI:28938"/>
        <dbReference type="EC" id="3.5.1.5"/>
    </reaction>
</comment>
<comment type="pathway">
    <text evidence="1">Nitrogen metabolism; urea degradation; CO(2) and NH(3) from urea (urease route): step 1/1.</text>
</comment>
<comment type="subunit">
    <text evidence="1">Heterotrimer of UreA (gamma), UreB (beta) and UreC (alpha) subunits. Three heterotrimers associate to form the active enzyme.</text>
</comment>
<comment type="subcellular location">
    <subcellularLocation>
        <location evidence="1">Cytoplasm</location>
    </subcellularLocation>
</comment>
<comment type="similarity">
    <text evidence="1">Belongs to the urease gamma subunit family.</text>
</comment>
<name>URE3_AZOVD</name>
<accession>C1DNK6</accession>
<gene>
    <name evidence="1" type="primary">ureA</name>
    <name type="ordered locus">Avin_09900</name>
</gene>
<protein>
    <recommendedName>
        <fullName evidence="1">Urease subunit gamma</fullName>
        <ecNumber evidence="1">3.5.1.5</ecNumber>
    </recommendedName>
    <alternativeName>
        <fullName evidence="1">Urea amidohydrolase subunit gamma</fullName>
    </alternativeName>
</protein>
<reference key="1">
    <citation type="journal article" date="2009" name="J. Bacteriol.">
        <title>Genome sequence of Azotobacter vinelandii, an obligate aerobe specialized to support diverse anaerobic metabolic processes.</title>
        <authorList>
            <person name="Setubal J.C."/>
            <person name="Dos Santos P."/>
            <person name="Goldman B.S."/>
            <person name="Ertesvaag H."/>
            <person name="Espin G."/>
            <person name="Rubio L.M."/>
            <person name="Valla S."/>
            <person name="Almeida N.F."/>
            <person name="Balasubramanian D."/>
            <person name="Cromes L."/>
            <person name="Curatti L."/>
            <person name="Du Z."/>
            <person name="Godsy E."/>
            <person name="Goodner B."/>
            <person name="Hellner-Burris K."/>
            <person name="Hernandez J.A."/>
            <person name="Houmiel K."/>
            <person name="Imperial J."/>
            <person name="Kennedy C."/>
            <person name="Larson T.J."/>
            <person name="Latreille P."/>
            <person name="Ligon L.S."/>
            <person name="Lu J."/>
            <person name="Maerk M."/>
            <person name="Miller N.M."/>
            <person name="Norton S."/>
            <person name="O'Carroll I.P."/>
            <person name="Paulsen I."/>
            <person name="Raulfs E.C."/>
            <person name="Roemer R."/>
            <person name="Rosser J."/>
            <person name="Segura D."/>
            <person name="Slater S."/>
            <person name="Stricklin S.L."/>
            <person name="Studholme D.J."/>
            <person name="Sun J."/>
            <person name="Viana C.J."/>
            <person name="Wallin E."/>
            <person name="Wang B."/>
            <person name="Wheeler C."/>
            <person name="Zhu H."/>
            <person name="Dean D.R."/>
            <person name="Dixon R."/>
            <person name="Wood D."/>
        </authorList>
    </citation>
    <scope>NUCLEOTIDE SEQUENCE [LARGE SCALE GENOMIC DNA]</scope>
    <source>
        <strain>DJ / ATCC BAA-1303</strain>
    </source>
</reference>